<comment type="function">
    <text evidence="1">Protein S19 forms a complex with S13 that binds strongly to the 16S ribosomal RNA.</text>
</comment>
<comment type="similarity">
    <text evidence="1">Belongs to the universal ribosomal protein uS19 family.</text>
</comment>
<protein>
    <recommendedName>
        <fullName evidence="1">Small ribosomal subunit protein uS19</fullName>
    </recommendedName>
    <alternativeName>
        <fullName evidence="2">30S ribosomal protein S19</fullName>
    </alternativeName>
</protein>
<accession>A6UZJ2</accession>
<proteinExistence type="inferred from homology"/>
<organism>
    <name type="scientific">Pseudomonas paraeruginosa (strain DSM 24068 / PA7)</name>
    <name type="common">Pseudomonas aeruginosa (strain PA7)</name>
    <dbReference type="NCBI Taxonomy" id="381754"/>
    <lineage>
        <taxon>Bacteria</taxon>
        <taxon>Pseudomonadati</taxon>
        <taxon>Pseudomonadota</taxon>
        <taxon>Gammaproteobacteria</taxon>
        <taxon>Pseudomonadales</taxon>
        <taxon>Pseudomonadaceae</taxon>
        <taxon>Pseudomonas</taxon>
        <taxon>Pseudomonas paraeruginosa</taxon>
    </lineage>
</organism>
<dbReference type="EMBL" id="CP000744">
    <property type="protein sequence ID" value="ABR86888.1"/>
    <property type="molecule type" value="Genomic_DNA"/>
</dbReference>
<dbReference type="RefSeq" id="WP_003093734.1">
    <property type="nucleotide sequence ID" value="NC_009656.1"/>
</dbReference>
<dbReference type="SMR" id="A6UZJ2"/>
<dbReference type="GeneID" id="77219202"/>
<dbReference type="KEGG" id="pap:PSPA7_0841"/>
<dbReference type="HOGENOM" id="CLU_144911_0_1_6"/>
<dbReference type="Proteomes" id="UP000001582">
    <property type="component" value="Chromosome"/>
</dbReference>
<dbReference type="GO" id="GO:0005737">
    <property type="term" value="C:cytoplasm"/>
    <property type="evidence" value="ECO:0007669"/>
    <property type="project" value="UniProtKB-ARBA"/>
</dbReference>
<dbReference type="GO" id="GO:0015935">
    <property type="term" value="C:small ribosomal subunit"/>
    <property type="evidence" value="ECO:0007669"/>
    <property type="project" value="InterPro"/>
</dbReference>
<dbReference type="GO" id="GO:0019843">
    <property type="term" value="F:rRNA binding"/>
    <property type="evidence" value="ECO:0007669"/>
    <property type="project" value="UniProtKB-UniRule"/>
</dbReference>
<dbReference type="GO" id="GO:0003735">
    <property type="term" value="F:structural constituent of ribosome"/>
    <property type="evidence" value="ECO:0007669"/>
    <property type="project" value="InterPro"/>
</dbReference>
<dbReference type="GO" id="GO:0000028">
    <property type="term" value="P:ribosomal small subunit assembly"/>
    <property type="evidence" value="ECO:0007669"/>
    <property type="project" value="TreeGrafter"/>
</dbReference>
<dbReference type="GO" id="GO:0006412">
    <property type="term" value="P:translation"/>
    <property type="evidence" value="ECO:0007669"/>
    <property type="project" value="UniProtKB-UniRule"/>
</dbReference>
<dbReference type="FunFam" id="3.30.860.10:FF:000001">
    <property type="entry name" value="30S ribosomal protein S19"/>
    <property type="match status" value="1"/>
</dbReference>
<dbReference type="Gene3D" id="3.30.860.10">
    <property type="entry name" value="30s Ribosomal Protein S19, Chain A"/>
    <property type="match status" value="1"/>
</dbReference>
<dbReference type="HAMAP" id="MF_00531">
    <property type="entry name" value="Ribosomal_uS19"/>
    <property type="match status" value="1"/>
</dbReference>
<dbReference type="InterPro" id="IPR002222">
    <property type="entry name" value="Ribosomal_uS19"/>
</dbReference>
<dbReference type="InterPro" id="IPR005732">
    <property type="entry name" value="Ribosomal_uS19_bac-type"/>
</dbReference>
<dbReference type="InterPro" id="IPR020934">
    <property type="entry name" value="Ribosomal_uS19_CS"/>
</dbReference>
<dbReference type="InterPro" id="IPR023575">
    <property type="entry name" value="Ribosomal_uS19_SF"/>
</dbReference>
<dbReference type="NCBIfam" id="TIGR01050">
    <property type="entry name" value="rpsS_bact"/>
    <property type="match status" value="1"/>
</dbReference>
<dbReference type="PANTHER" id="PTHR11880">
    <property type="entry name" value="RIBOSOMAL PROTEIN S19P FAMILY MEMBER"/>
    <property type="match status" value="1"/>
</dbReference>
<dbReference type="PANTHER" id="PTHR11880:SF8">
    <property type="entry name" value="SMALL RIBOSOMAL SUBUNIT PROTEIN US19M"/>
    <property type="match status" value="1"/>
</dbReference>
<dbReference type="Pfam" id="PF00203">
    <property type="entry name" value="Ribosomal_S19"/>
    <property type="match status" value="1"/>
</dbReference>
<dbReference type="PIRSF" id="PIRSF002144">
    <property type="entry name" value="Ribosomal_S19"/>
    <property type="match status" value="1"/>
</dbReference>
<dbReference type="PRINTS" id="PR00975">
    <property type="entry name" value="RIBOSOMALS19"/>
</dbReference>
<dbReference type="SUPFAM" id="SSF54570">
    <property type="entry name" value="Ribosomal protein S19"/>
    <property type="match status" value="1"/>
</dbReference>
<dbReference type="PROSITE" id="PS00323">
    <property type="entry name" value="RIBOSOMAL_S19"/>
    <property type="match status" value="1"/>
</dbReference>
<gene>
    <name evidence="1" type="primary">rpsS</name>
    <name type="ordered locus">PSPA7_0841</name>
</gene>
<sequence length="91" mass="10357">MPRSLKKGPFIDLHLLKKVEVAVEKNDRKPIKTWSRRSMILPHMVGLTIAVHNGRQHVPVLVNEDMVGHKLGEFAATRTYRGHAADKKAKR</sequence>
<keyword id="KW-0687">Ribonucleoprotein</keyword>
<keyword id="KW-0689">Ribosomal protein</keyword>
<keyword id="KW-0694">RNA-binding</keyword>
<keyword id="KW-0699">rRNA-binding</keyword>
<evidence type="ECO:0000255" key="1">
    <source>
        <dbReference type="HAMAP-Rule" id="MF_00531"/>
    </source>
</evidence>
<evidence type="ECO:0000305" key="2"/>
<reference key="1">
    <citation type="submission" date="2007-06" db="EMBL/GenBank/DDBJ databases">
        <authorList>
            <person name="Dodson R.J."/>
            <person name="Harkins D."/>
            <person name="Paulsen I.T."/>
        </authorList>
    </citation>
    <scope>NUCLEOTIDE SEQUENCE [LARGE SCALE GENOMIC DNA]</scope>
    <source>
        <strain>DSM 24068 / PA7</strain>
    </source>
</reference>
<name>RS19_PSEP7</name>
<feature type="chain" id="PRO_1000051102" description="Small ribosomal subunit protein uS19">
    <location>
        <begin position="1"/>
        <end position="91"/>
    </location>
</feature>